<sequence length="555" mass="62658">MYSDKKNILQLVALLRAHGVTKVVLCPGSRNAPIVHTLAGHPDFTCYSVTDERSAGFFAIGLALQGGTPAAVCCTSGTALLNLHPAIAEAYYQKVSLVVISADRPAAWINQMDGQTLPQPGVFRSLVKKSVDLPEIHTDEDEWYCNRLLNEALLELNHHGKGPVHINVPVSEPLFQFTAESLPEVRVITRYQGLNVYDRDYDGLIDRLNKYNRRMMIVGQMNLIYLFEKKYSKMLYKQFAWFTEHLGNQTVPGIPIRNFDAALYAMSPEMQEKMIPELVITYGGHIVSKRMKKYLRQHPPKEHWHVSPDGEVIDLFQGALTTIIEMDPFEFMEKIAFLLDNRTPEYPRQWENFCKELPRPELPYSEMSAIGSLIQALPASCALHLANSSAVRYAQLYSLPDTVEVCCNRGTSGIEGSLSTAIGYAAASKKLNFVVIGDLSFFYDMNALWNNHFGSNLRILLLNNGGGEIFHTLPGLEMSGTSHRFVTAVHKTSAKGWAEERGFLYQEVQDEKQLDEAMKTFTQPELLTQPVIMEVFTNKNKDARILKDYYHQLKN</sequence>
<comment type="function">
    <text evidence="1">Catalyzes the thiamine diphosphate-dependent decarboxylation of 2-oxoglutarate and the subsequent addition of the resulting succinic semialdehyde-thiamine pyrophosphate anion to isochorismate to yield 2-succinyl-5-enolpyruvyl-6-hydroxy-3-cyclohexene-1-carboxylate (SEPHCHC).</text>
</comment>
<comment type="catalytic activity">
    <reaction evidence="1">
        <text>isochorismate + 2-oxoglutarate + H(+) = 5-enolpyruvoyl-6-hydroxy-2-succinyl-cyclohex-3-ene-1-carboxylate + CO2</text>
        <dbReference type="Rhea" id="RHEA:25593"/>
        <dbReference type="ChEBI" id="CHEBI:15378"/>
        <dbReference type="ChEBI" id="CHEBI:16526"/>
        <dbReference type="ChEBI" id="CHEBI:16810"/>
        <dbReference type="ChEBI" id="CHEBI:29780"/>
        <dbReference type="ChEBI" id="CHEBI:58818"/>
        <dbReference type="EC" id="2.2.1.9"/>
    </reaction>
</comment>
<comment type="cofactor">
    <cofactor evidence="1">
        <name>Mg(2+)</name>
        <dbReference type="ChEBI" id="CHEBI:18420"/>
    </cofactor>
    <cofactor evidence="1">
        <name>Mn(2+)</name>
        <dbReference type="ChEBI" id="CHEBI:29035"/>
    </cofactor>
</comment>
<comment type="cofactor">
    <cofactor evidence="1">
        <name>thiamine diphosphate</name>
        <dbReference type="ChEBI" id="CHEBI:58937"/>
    </cofactor>
    <text evidence="1">Binds 1 thiamine pyrophosphate per subunit.</text>
</comment>
<comment type="pathway">
    <text evidence="1">Quinol/quinone metabolism; 1,4-dihydroxy-2-naphthoate biosynthesis; 1,4-dihydroxy-2-naphthoate from chorismate: step 2/7.</text>
</comment>
<comment type="pathway">
    <text evidence="1">Quinol/quinone metabolism; menaquinone biosynthesis.</text>
</comment>
<comment type="subunit">
    <text evidence="1">Homodimer.</text>
</comment>
<comment type="similarity">
    <text evidence="1">Belongs to the TPP enzyme family. MenD subfamily.</text>
</comment>
<feature type="chain" id="PRO_0000341714" description="2-succinyl-5-enolpyruvyl-6-hydroxy-3-cyclohexene-1-carboxylate synthase">
    <location>
        <begin position="1"/>
        <end position="555"/>
    </location>
</feature>
<gene>
    <name evidence="1" type="primary">menD</name>
    <name type="ordered locus">BF1316</name>
</gene>
<name>MEND_BACFR</name>
<reference key="1">
    <citation type="journal article" date="2004" name="Proc. Natl. Acad. Sci. U.S.A.">
        <title>Genomic analysis of Bacteroides fragilis reveals extensive DNA inversions regulating cell surface adaptation.</title>
        <authorList>
            <person name="Kuwahara T."/>
            <person name="Yamashita A."/>
            <person name="Hirakawa H."/>
            <person name="Nakayama H."/>
            <person name="Toh H."/>
            <person name="Okada N."/>
            <person name="Kuhara S."/>
            <person name="Hattori M."/>
            <person name="Hayashi T."/>
            <person name="Ohnishi Y."/>
        </authorList>
    </citation>
    <scope>NUCLEOTIDE SEQUENCE [LARGE SCALE GENOMIC DNA]</scope>
    <source>
        <strain>YCH46</strain>
    </source>
</reference>
<accession>Q64WR0</accession>
<protein>
    <recommendedName>
        <fullName evidence="1">2-succinyl-5-enolpyruvyl-6-hydroxy-3-cyclohexene-1-carboxylate synthase</fullName>
        <shortName evidence="1">SEPHCHC synthase</shortName>
        <ecNumber evidence="1">2.2.1.9</ecNumber>
    </recommendedName>
    <alternativeName>
        <fullName evidence="1">Menaquinone biosynthesis protein MenD</fullName>
    </alternativeName>
</protein>
<dbReference type="EC" id="2.2.1.9" evidence="1"/>
<dbReference type="EMBL" id="AP006841">
    <property type="protein sequence ID" value="BAD48066.1"/>
    <property type="molecule type" value="Genomic_DNA"/>
</dbReference>
<dbReference type="RefSeq" id="WP_005786027.1">
    <property type="nucleotide sequence ID" value="NZ_UYXF01000002.1"/>
</dbReference>
<dbReference type="RefSeq" id="YP_098600.1">
    <property type="nucleotide sequence ID" value="NC_006347.1"/>
</dbReference>
<dbReference type="SMR" id="Q64WR0"/>
<dbReference type="STRING" id="295405.BF1316"/>
<dbReference type="GeneID" id="60366635"/>
<dbReference type="KEGG" id="bfr:BF1316"/>
<dbReference type="PATRIC" id="fig|295405.11.peg.1298"/>
<dbReference type="HOGENOM" id="CLU_006051_3_0_10"/>
<dbReference type="OrthoDB" id="9791859at2"/>
<dbReference type="UniPathway" id="UPA00079"/>
<dbReference type="UniPathway" id="UPA01057">
    <property type="reaction ID" value="UER00164"/>
</dbReference>
<dbReference type="Proteomes" id="UP000002197">
    <property type="component" value="Chromosome"/>
</dbReference>
<dbReference type="GO" id="GO:0070204">
    <property type="term" value="F:2-succinyl-5-enolpyruvyl-6-hydroxy-3-cyclohexene-1-carboxylic-acid synthase activity"/>
    <property type="evidence" value="ECO:0007669"/>
    <property type="project" value="UniProtKB-UniRule"/>
</dbReference>
<dbReference type="GO" id="GO:0000287">
    <property type="term" value="F:magnesium ion binding"/>
    <property type="evidence" value="ECO:0007669"/>
    <property type="project" value="UniProtKB-UniRule"/>
</dbReference>
<dbReference type="GO" id="GO:0030145">
    <property type="term" value="F:manganese ion binding"/>
    <property type="evidence" value="ECO:0007669"/>
    <property type="project" value="UniProtKB-UniRule"/>
</dbReference>
<dbReference type="GO" id="GO:0030976">
    <property type="term" value="F:thiamine pyrophosphate binding"/>
    <property type="evidence" value="ECO:0007669"/>
    <property type="project" value="UniProtKB-UniRule"/>
</dbReference>
<dbReference type="GO" id="GO:0009234">
    <property type="term" value="P:menaquinone biosynthetic process"/>
    <property type="evidence" value="ECO:0007669"/>
    <property type="project" value="UniProtKB-UniRule"/>
</dbReference>
<dbReference type="CDD" id="cd07037">
    <property type="entry name" value="TPP_PYR_MenD"/>
    <property type="match status" value="1"/>
</dbReference>
<dbReference type="CDD" id="cd02009">
    <property type="entry name" value="TPP_SHCHC_synthase"/>
    <property type="match status" value="1"/>
</dbReference>
<dbReference type="Gene3D" id="3.40.50.970">
    <property type="match status" value="2"/>
</dbReference>
<dbReference type="Gene3D" id="3.40.50.1220">
    <property type="entry name" value="TPP-binding domain"/>
    <property type="match status" value="1"/>
</dbReference>
<dbReference type="HAMAP" id="MF_01659">
    <property type="entry name" value="MenD"/>
    <property type="match status" value="1"/>
</dbReference>
<dbReference type="InterPro" id="IPR004433">
    <property type="entry name" value="MenaQ_synth_MenD"/>
</dbReference>
<dbReference type="InterPro" id="IPR029061">
    <property type="entry name" value="THDP-binding"/>
</dbReference>
<dbReference type="InterPro" id="IPR012001">
    <property type="entry name" value="Thiamin_PyroP_enz_TPP-bd_dom"/>
</dbReference>
<dbReference type="NCBIfam" id="TIGR00173">
    <property type="entry name" value="menD"/>
    <property type="match status" value="1"/>
</dbReference>
<dbReference type="PANTHER" id="PTHR42916">
    <property type="entry name" value="2-SUCCINYL-5-ENOLPYRUVYL-6-HYDROXY-3-CYCLOHEXENE-1-CARBOXYLATE SYNTHASE"/>
    <property type="match status" value="1"/>
</dbReference>
<dbReference type="PANTHER" id="PTHR42916:SF1">
    <property type="entry name" value="PROTEIN PHYLLO, CHLOROPLASTIC"/>
    <property type="match status" value="1"/>
</dbReference>
<dbReference type="Pfam" id="PF02776">
    <property type="entry name" value="TPP_enzyme_N"/>
    <property type="match status" value="1"/>
</dbReference>
<dbReference type="PIRSF" id="PIRSF004983">
    <property type="entry name" value="MenD"/>
    <property type="match status" value="1"/>
</dbReference>
<dbReference type="SUPFAM" id="SSF52518">
    <property type="entry name" value="Thiamin diphosphate-binding fold (THDP-binding)"/>
    <property type="match status" value="2"/>
</dbReference>
<organism>
    <name type="scientific">Bacteroides fragilis (strain YCH46)</name>
    <dbReference type="NCBI Taxonomy" id="295405"/>
    <lineage>
        <taxon>Bacteria</taxon>
        <taxon>Pseudomonadati</taxon>
        <taxon>Bacteroidota</taxon>
        <taxon>Bacteroidia</taxon>
        <taxon>Bacteroidales</taxon>
        <taxon>Bacteroidaceae</taxon>
        <taxon>Bacteroides</taxon>
    </lineage>
</organism>
<proteinExistence type="inferred from homology"/>
<evidence type="ECO:0000255" key="1">
    <source>
        <dbReference type="HAMAP-Rule" id="MF_01659"/>
    </source>
</evidence>
<keyword id="KW-0460">Magnesium</keyword>
<keyword id="KW-0464">Manganese</keyword>
<keyword id="KW-0474">Menaquinone biosynthesis</keyword>
<keyword id="KW-0479">Metal-binding</keyword>
<keyword id="KW-0786">Thiamine pyrophosphate</keyword>
<keyword id="KW-0808">Transferase</keyword>